<keyword id="KW-0025">Alternative splicing</keyword>
<keyword id="KW-0223">Dioxygenase</keyword>
<keyword id="KW-1015">Disulfide bond</keyword>
<keyword id="KW-0256">Endoplasmic reticulum</keyword>
<keyword id="KW-0325">Glycoprotein</keyword>
<keyword id="KW-0408">Iron</keyword>
<keyword id="KW-0472">Membrane</keyword>
<keyword id="KW-0479">Metal-binding</keyword>
<keyword id="KW-0560">Oxidoreductase</keyword>
<keyword id="KW-1185">Reference proteome</keyword>
<keyword id="KW-0735">Signal-anchor</keyword>
<keyword id="KW-0812">Transmembrane</keyword>
<keyword id="KW-1133">Transmembrane helix</keyword>
<organism>
    <name type="scientific">Arabidopsis thaliana</name>
    <name type="common">Mouse-ear cress</name>
    <dbReference type="NCBI Taxonomy" id="3702"/>
    <lineage>
        <taxon>Eukaryota</taxon>
        <taxon>Viridiplantae</taxon>
        <taxon>Streptophyta</taxon>
        <taxon>Embryophyta</taxon>
        <taxon>Tracheophyta</taxon>
        <taxon>Spermatophyta</taxon>
        <taxon>Magnoliopsida</taxon>
        <taxon>eudicotyledons</taxon>
        <taxon>Gunneridae</taxon>
        <taxon>Pentapetalae</taxon>
        <taxon>rosids</taxon>
        <taxon>malvids</taxon>
        <taxon>Brassicales</taxon>
        <taxon>Brassicaceae</taxon>
        <taxon>Camelineae</taxon>
        <taxon>Arabidopsis</taxon>
    </lineage>
</organism>
<dbReference type="EC" id="1.14.11.2" evidence="8"/>
<dbReference type="EMBL" id="AB026644">
    <property type="protein sequence ID" value="BAB02864.1"/>
    <property type="status" value="ALT_SEQ"/>
    <property type="molecule type" value="Genomic_DNA"/>
</dbReference>
<dbReference type="EMBL" id="CP002686">
    <property type="protein sequence ID" value="AEE77450.1"/>
    <property type="molecule type" value="Genomic_DNA"/>
</dbReference>
<dbReference type="EMBL" id="AY065036">
    <property type="protein sequence ID" value="AAL57673.1"/>
    <property type="molecule type" value="mRNA"/>
</dbReference>
<dbReference type="EMBL" id="BT001114">
    <property type="protein sequence ID" value="AAN64505.1"/>
    <property type="molecule type" value="mRNA"/>
</dbReference>
<dbReference type="EMBL" id="AY088608">
    <property type="protein sequence ID" value="AAM66931.1"/>
    <property type="molecule type" value="mRNA"/>
</dbReference>
<dbReference type="RefSeq" id="NP_566838.1">
    <molecule id="Q8L970-1"/>
    <property type="nucleotide sequence ID" value="NM_113768.4"/>
</dbReference>
<dbReference type="SMR" id="Q8L970"/>
<dbReference type="FunCoup" id="Q8L970">
    <property type="interactions" value="397"/>
</dbReference>
<dbReference type="STRING" id="3702.Q8L970"/>
<dbReference type="GlyCosmos" id="Q8L970">
    <property type="glycosylation" value="3 sites, No reported glycans"/>
</dbReference>
<dbReference type="GlyGen" id="Q8L970">
    <property type="glycosylation" value="3 sites"/>
</dbReference>
<dbReference type="MetOSite" id="Q8L970"/>
<dbReference type="PaxDb" id="3702-AT3G28480.2"/>
<dbReference type="ProteomicsDB" id="248731">
    <molecule id="Q8L970-1"/>
</dbReference>
<dbReference type="EnsemblPlants" id="AT3G28480.1">
    <molecule id="Q8L970-1"/>
    <property type="protein sequence ID" value="AT3G28480.1"/>
    <property type="gene ID" value="AT3G28480"/>
</dbReference>
<dbReference type="GeneID" id="822478"/>
<dbReference type="Gramene" id="AT3G28480.1">
    <molecule id="Q8L970-1"/>
    <property type="protein sequence ID" value="AT3G28480.1"/>
    <property type="gene ID" value="AT3G28480"/>
</dbReference>
<dbReference type="KEGG" id="ath:AT3G28480"/>
<dbReference type="Araport" id="AT3G28480"/>
<dbReference type="TAIR" id="AT3G28480"/>
<dbReference type="eggNOG" id="KOG1591">
    <property type="taxonomic scope" value="Eukaryota"/>
</dbReference>
<dbReference type="HOGENOM" id="CLU_058132_5_0_1"/>
<dbReference type="InParanoid" id="Q8L970"/>
<dbReference type="OMA" id="CAHCRIE"/>
<dbReference type="OrthoDB" id="420380at2759"/>
<dbReference type="PhylomeDB" id="Q8L970"/>
<dbReference type="BRENDA" id="1.14.11.2">
    <property type="organism ID" value="399"/>
</dbReference>
<dbReference type="PRO" id="PR:Q8L970"/>
<dbReference type="Proteomes" id="UP000006548">
    <property type="component" value="Chromosome 3"/>
</dbReference>
<dbReference type="ExpressionAtlas" id="Q8L970">
    <property type="expression patterns" value="baseline and differential"/>
</dbReference>
<dbReference type="GO" id="GO:0005789">
    <property type="term" value="C:endoplasmic reticulum membrane"/>
    <property type="evidence" value="ECO:0007669"/>
    <property type="project" value="UniProtKB-SubCell"/>
</dbReference>
<dbReference type="GO" id="GO:0005506">
    <property type="term" value="F:iron ion binding"/>
    <property type="evidence" value="ECO:0007669"/>
    <property type="project" value="InterPro"/>
</dbReference>
<dbReference type="GO" id="GO:0031418">
    <property type="term" value="F:L-ascorbic acid binding"/>
    <property type="evidence" value="ECO:0007669"/>
    <property type="project" value="InterPro"/>
</dbReference>
<dbReference type="GO" id="GO:0004656">
    <property type="term" value="F:procollagen-proline 4-dioxygenase activity"/>
    <property type="evidence" value="ECO:0007669"/>
    <property type="project" value="UniProtKB-EC"/>
</dbReference>
<dbReference type="FunFam" id="2.60.120.620:FF:000002">
    <property type="entry name" value="Prolyl 4-hydroxylase 4"/>
    <property type="match status" value="1"/>
</dbReference>
<dbReference type="Gene3D" id="2.60.120.620">
    <property type="entry name" value="q2cbj1_9rhob like domain"/>
    <property type="match status" value="1"/>
</dbReference>
<dbReference type="InterPro" id="IPR005123">
    <property type="entry name" value="Oxoglu/Fe-dep_dioxygenase_dom"/>
</dbReference>
<dbReference type="InterPro" id="IPR045054">
    <property type="entry name" value="P4HA-like"/>
</dbReference>
<dbReference type="InterPro" id="IPR006620">
    <property type="entry name" value="Pro_4_hyd_alph"/>
</dbReference>
<dbReference type="InterPro" id="IPR044862">
    <property type="entry name" value="Pro_4_hyd_alph_FE2OG_OXY"/>
</dbReference>
<dbReference type="InterPro" id="IPR003582">
    <property type="entry name" value="ShKT_dom"/>
</dbReference>
<dbReference type="PANTHER" id="PTHR10869:SF238">
    <property type="entry name" value="PROLYL 4-HYDROXYLASE 6-RELATED"/>
    <property type="match status" value="1"/>
</dbReference>
<dbReference type="PANTHER" id="PTHR10869">
    <property type="entry name" value="PROLYL 4-HYDROXYLASE ALPHA SUBUNIT"/>
    <property type="match status" value="1"/>
</dbReference>
<dbReference type="Pfam" id="PF13640">
    <property type="entry name" value="2OG-FeII_Oxy_3"/>
    <property type="match status" value="1"/>
</dbReference>
<dbReference type="SMART" id="SM00702">
    <property type="entry name" value="P4Hc"/>
    <property type="match status" value="1"/>
</dbReference>
<dbReference type="SMART" id="SM00254">
    <property type="entry name" value="ShKT"/>
    <property type="match status" value="1"/>
</dbReference>
<dbReference type="PROSITE" id="PS51471">
    <property type="entry name" value="FE2OG_OXY"/>
    <property type="match status" value="1"/>
</dbReference>
<dbReference type="PROSITE" id="PS51670">
    <property type="entry name" value="SHKT"/>
    <property type="match status" value="1"/>
</dbReference>
<accession>Q8L970</accession>
<accession>Q8VZD7</accession>
<accession>Q9LSI6</accession>
<evidence type="ECO:0000250" key="1">
    <source>
        <dbReference type="UniProtKB" id="F4JAU3"/>
    </source>
</evidence>
<evidence type="ECO:0000250" key="2">
    <source>
        <dbReference type="UniProtKB" id="Q86KR9"/>
    </source>
</evidence>
<evidence type="ECO:0000255" key="3"/>
<evidence type="ECO:0000255" key="4">
    <source>
        <dbReference type="PROSITE-ProRule" id="PRU00498"/>
    </source>
</evidence>
<evidence type="ECO:0000255" key="5">
    <source>
        <dbReference type="PROSITE-ProRule" id="PRU00805"/>
    </source>
</evidence>
<evidence type="ECO:0000255" key="6">
    <source>
        <dbReference type="PROSITE-ProRule" id="PRU01005"/>
    </source>
</evidence>
<evidence type="ECO:0000303" key="7">
    <source ref="5"/>
</evidence>
<evidence type="ECO:0000305" key="8"/>
<feature type="chain" id="PRO_0000429341" description="Probable prolyl 4-hydroxylase 7">
    <location>
        <begin position="1"/>
        <end position="316"/>
    </location>
</feature>
<feature type="topological domain" description="Cytoplasmic" evidence="8">
    <location>
        <begin position="1"/>
        <end position="4"/>
    </location>
</feature>
<feature type="transmembrane region" description="Helical; Signal-anchor for type II membrane protein" evidence="3">
    <location>
        <begin position="5"/>
        <end position="24"/>
    </location>
</feature>
<feature type="topological domain" description="Lumenal" evidence="8">
    <location>
        <begin position="25"/>
        <end position="316"/>
    </location>
</feature>
<feature type="domain" description="Fe2OG dioxygenase" evidence="5">
    <location>
        <begin position="139"/>
        <end position="261"/>
    </location>
</feature>
<feature type="domain" description="ShKT" evidence="6">
    <location>
        <begin position="274"/>
        <end position="314"/>
    </location>
</feature>
<feature type="binding site" evidence="5">
    <location>
        <position position="157"/>
    </location>
    <ligand>
        <name>Fe cation</name>
        <dbReference type="ChEBI" id="CHEBI:24875"/>
    </ligand>
</feature>
<feature type="binding site" evidence="5">
    <location>
        <position position="159"/>
    </location>
    <ligand>
        <name>Fe cation</name>
        <dbReference type="ChEBI" id="CHEBI:24875"/>
    </ligand>
</feature>
<feature type="binding site" evidence="5">
    <location>
        <position position="242"/>
    </location>
    <ligand>
        <name>Fe cation</name>
        <dbReference type="ChEBI" id="CHEBI:24875"/>
    </ligand>
</feature>
<feature type="binding site" evidence="5">
    <location>
        <position position="252"/>
    </location>
    <ligand>
        <name>2-oxoglutarate</name>
        <dbReference type="ChEBI" id="CHEBI:16810"/>
    </ligand>
</feature>
<feature type="glycosylation site" description="N-linked (GlcNAc...) asparagine" evidence="4">
    <location>
        <position position="96"/>
    </location>
</feature>
<feature type="glycosylation site" description="N-linked (GlcNAc...) asparagine" evidence="4">
    <location>
        <position position="233"/>
    </location>
</feature>
<feature type="glycosylation site" description="N-linked (GlcNAc...) asparagine" evidence="4">
    <location>
        <position position="278"/>
    </location>
</feature>
<feature type="disulfide bond" evidence="6">
    <location>
        <begin position="274"/>
        <end position="314"/>
    </location>
</feature>
<feature type="disulfide bond" evidence="6">
    <location>
        <begin position="281"/>
        <end position="307"/>
    </location>
</feature>
<feature type="disulfide bond" evidence="6">
    <location>
        <begin position="290"/>
        <end position="311"/>
    </location>
</feature>
<feature type="sequence conflict" description="In Ref. 3; AAL57673/AAN64505." evidence="8" ref="3">
    <original>S</original>
    <variation>N</variation>
    <location>
        <position position="123"/>
    </location>
</feature>
<comment type="function">
    <text>Catalyzes the post-translational formation of 4-hydroxyproline in -Xaa-Pro-Gly- sequences in proline-rich peptide sequences of plant glycoproteins and other proteins. Hydroxyprolines are important constituent of many plant cell wall glycoproteins such as extensins, hydroxyproline-rich glycoproteins, lectins and arabinogalactan proteins.</text>
</comment>
<comment type="catalytic activity">
    <reaction evidence="1">
        <text>L-prolyl-[collagen] + 2-oxoglutarate + O2 = trans-4-hydroxy-L-prolyl-[collagen] + succinate + CO2</text>
        <dbReference type="Rhea" id="RHEA:18945"/>
        <dbReference type="Rhea" id="RHEA-COMP:11676"/>
        <dbReference type="Rhea" id="RHEA-COMP:11680"/>
        <dbReference type="ChEBI" id="CHEBI:15379"/>
        <dbReference type="ChEBI" id="CHEBI:16526"/>
        <dbReference type="ChEBI" id="CHEBI:16810"/>
        <dbReference type="ChEBI" id="CHEBI:30031"/>
        <dbReference type="ChEBI" id="CHEBI:50342"/>
        <dbReference type="ChEBI" id="CHEBI:61965"/>
        <dbReference type="EC" id="1.14.11.2"/>
    </reaction>
</comment>
<comment type="cofactor">
    <cofactor evidence="5">
        <name>Fe(2+)</name>
        <dbReference type="ChEBI" id="CHEBI:29033"/>
    </cofactor>
    <text evidence="5">Binds 1 Fe(2+) ion per subunit.</text>
</comment>
<comment type="cofactor">
    <cofactor evidence="2">
        <name>L-ascorbate</name>
        <dbReference type="ChEBI" id="CHEBI:38290"/>
    </cofactor>
</comment>
<comment type="subcellular location">
    <subcellularLocation>
        <location evidence="1">Endoplasmic reticulum membrane</location>
        <topology evidence="1">Single-pass type II membrane protein</topology>
    </subcellularLocation>
</comment>
<comment type="alternative products">
    <event type="alternative splicing"/>
    <isoform>
        <id>Q8L970-1</id>
        <name>1</name>
        <sequence type="displayed"/>
    </isoform>
    <text>A number of isoforms are produced. According to EST sequences.</text>
</comment>
<comment type="similarity">
    <text evidence="8">Belongs to the P4HA family.</text>
</comment>
<comment type="sequence caution" evidence="8">
    <conflict type="erroneous gene model prediction">
        <sequence resource="EMBL-CDS" id="BAB02864"/>
    </conflict>
</comment>
<gene>
    <name evidence="7" type="primary">P4H7</name>
    <name type="ordered locus">At3g28480</name>
    <name type="ORF">MFJ20.17</name>
</gene>
<name>P4H7_ARATH</name>
<sequence>MDSRIFLAFSLCFLFTLPLISSAPNRFLTRSSNTRDGSVIKMKTSASSFGFDPTRVTQLSWTPRVFLYEGFLSDEECDHFIKLAKGKLEKSMVADNDSGESVESEVRTSSGMFLSKRQDDIVSNVEAKLAAWTFLPEENGESMQILHYENGQKYEPHFDYFHDQANLELGGHRIATVLMYLSNVEKGGETVFPMWKGKATQLKDDSWTECAKQGYAVKPRKGDALLFFNLHPNATTDSNSLHGSCPVVEGEKWSATRWIHVKSFERAFNKQSGCMDENVSCEKWAKAGECQKNPTYMVGSDKDHGYCRKSCKACSS</sequence>
<proteinExistence type="evidence at transcript level"/>
<reference key="1">
    <citation type="journal article" date="2000" name="DNA Res.">
        <title>Structural analysis of Arabidopsis thaliana chromosome 3. I. Sequence features of the regions of 4,504,864 bp covered by sixty P1 and TAC clones.</title>
        <authorList>
            <person name="Sato S."/>
            <person name="Nakamura Y."/>
            <person name="Kaneko T."/>
            <person name="Katoh T."/>
            <person name="Asamizu E."/>
            <person name="Tabata S."/>
        </authorList>
    </citation>
    <scope>NUCLEOTIDE SEQUENCE [LARGE SCALE GENOMIC DNA]</scope>
    <source>
        <strain>cv. Columbia</strain>
    </source>
</reference>
<reference key="2">
    <citation type="journal article" date="2017" name="Plant J.">
        <title>Araport11: a complete reannotation of the Arabidopsis thaliana reference genome.</title>
        <authorList>
            <person name="Cheng C.Y."/>
            <person name="Krishnakumar V."/>
            <person name="Chan A.P."/>
            <person name="Thibaud-Nissen F."/>
            <person name="Schobel S."/>
            <person name="Town C.D."/>
        </authorList>
    </citation>
    <scope>GENOME REANNOTATION</scope>
    <source>
        <strain>cv. Columbia</strain>
    </source>
</reference>
<reference key="3">
    <citation type="journal article" date="2003" name="Science">
        <title>Empirical analysis of transcriptional activity in the Arabidopsis genome.</title>
        <authorList>
            <person name="Yamada K."/>
            <person name="Lim J."/>
            <person name="Dale J.M."/>
            <person name="Chen H."/>
            <person name="Shinn P."/>
            <person name="Palm C.J."/>
            <person name="Southwick A.M."/>
            <person name="Wu H.C."/>
            <person name="Kim C.J."/>
            <person name="Nguyen M."/>
            <person name="Pham P.K."/>
            <person name="Cheuk R.F."/>
            <person name="Karlin-Newmann G."/>
            <person name="Liu S.X."/>
            <person name="Lam B."/>
            <person name="Sakano H."/>
            <person name="Wu T."/>
            <person name="Yu G."/>
            <person name="Miranda M."/>
            <person name="Quach H.L."/>
            <person name="Tripp M."/>
            <person name="Chang C.H."/>
            <person name="Lee J.M."/>
            <person name="Toriumi M.J."/>
            <person name="Chan M.M."/>
            <person name="Tang C.C."/>
            <person name="Onodera C.S."/>
            <person name="Deng J.M."/>
            <person name="Akiyama K."/>
            <person name="Ansari Y."/>
            <person name="Arakawa T."/>
            <person name="Banh J."/>
            <person name="Banno F."/>
            <person name="Bowser L."/>
            <person name="Brooks S.Y."/>
            <person name="Carninci P."/>
            <person name="Chao Q."/>
            <person name="Choy N."/>
            <person name="Enju A."/>
            <person name="Goldsmith A.D."/>
            <person name="Gurjal M."/>
            <person name="Hansen N.F."/>
            <person name="Hayashizaki Y."/>
            <person name="Johnson-Hopson C."/>
            <person name="Hsuan V.W."/>
            <person name="Iida K."/>
            <person name="Karnes M."/>
            <person name="Khan S."/>
            <person name="Koesema E."/>
            <person name="Ishida J."/>
            <person name="Jiang P.X."/>
            <person name="Jones T."/>
            <person name="Kawai J."/>
            <person name="Kamiya A."/>
            <person name="Meyers C."/>
            <person name="Nakajima M."/>
            <person name="Narusaka M."/>
            <person name="Seki M."/>
            <person name="Sakurai T."/>
            <person name="Satou M."/>
            <person name="Tamse R."/>
            <person name="Vaysberg M."/>
            <person name="Wallender E.K."/>
            <person name="Wong C."/>
            <person name="Yamamura Y."/>
            <person name="Yuan S."/>
            <person name="Shinozaki K."/>
            <person name="Davis R.W."/>
            <person name="Theologis A."/>
            <person name="Ecker J.R."/>
        </authorList>
    </citation>
    <scope>NUCLEOTIDE SEQUENCE [LARGE SCALE MRNA]</scope>
    <source>
        <strain>cv. Columbia</strain>
    </source>
</reference>
<reference key="4">
    <citation type="submission" date="2002-03" db="EMBL/GenBank/DDBJ databases">
        <title>Full-length cDNA from Arabidopsis thaliana.</title>
        <authorList>
            <person name="Brover V.V."/>
            <person name="Troukhan M.E."/>
            <person name="Alexandrov N.A."/>
            <person name="Lu Y.-P."/>
            <person name="Flavell R.B."/>
            <person name="Feldmann K.A."/>
        </authorList>
    </citation>
    <scope>NUCLEOTIDE SEQUENCE [LARGE SCALE MRNA]</scope>
</reference>
<reference key="5">
    <citation type="journal article" date="2007" name="Physiol. Plantarum">
        <title>Arabidopsis prolyl 4-hydroxylases are differentially expressed in response to hypoxia, anoxia and mechanical wounding.</title>
        <authorList>
            <person name="Vlad F."/>
            <person name="Spano T."/>
            <person name="Vlad D."/>
            <person name="Bou Daher F."/>
            <person name="Ouelhadj A."/>
            <person name="Kalaitzis P."/>
        </authorList>
    </citation>
    <scope>GENE FAMILY</scope>
    <scope>NOMENCLATURE</scope>
</reference>
<protein>
    <recommendedName>
        <fullName evidence="8">Probable prolyl 4-hydroxylase 7</fullName>
        <shortName evidence="7">AtP4H7</shortName>
        <ecNumber evidence="8">1.14.11.2</ecNumber>
    </recommendedName>
</protein>